<reference key="1">
    <citation type="journal article" date="2005" name="Nature">
        <title>The genome sequence of the rice blast fungus Magnaporthe grisea.</title>
        <authorList>
            <person name="Dean R.A."/>
            <person name="Talbot N.J."/>
            <person name="Ebbole D.J."/>
            <person name="Farman M.L."/>
            <person name="Mitchell T.K."/>
            <person name="Orbach M.J."/>
            <person name="Thon M.R."/>
            <person name="Kulkarni R."/>
            <person name="Xu J.-R."/>
            <person name="Pan H."/>
            <person name="Read N.D."/>
            <person name="Lee Y.-H."/>
            <person name="Carbone I."/>
            <person name="Brown D."/>
            <person name="Oh Y.Y."/>
            <person name="Donofrio N."/>
            <person name="Jeong J.S."/>
            <person name="Soanes D.M."/>
            <person name="Djonovic S."/>
            <person name="Kolomiets E."/>
            <person name="Rehmeyer C."/>
            <person name="Li W."/>
            <person name="Harding M."/>
            <person name="Kim S."/>
            <person name="Lebrun M.-H."/>
            <person name="Bohnert H."/>
            <person name="Coughlan S."/>
            <person name="Butler J."/>
            <person name="Calvo S.E."/>
            <person name="Ma L.-J."/>
            <person name="Nicol R."/>
            <person name="Purcell S."/>
            <person name="Nusbaum C."/>
            <person name="Galagan J.E."/>
            <person name="Birren B.W."/>
        </authorList>
    </citation>
    <scope>NUCLEOTIDE SEQUENCE [LARGE SCALE GENOMIC DNA]</scope>
    <source>
        <strain>70-15 / ATCC MYA-4617 / FGSC 8958</strain>
    </source>
</reference>
<reference key="2">
    <citation type="journal article" date="1998" name="Proc. Natl. Acad. Sci. U.S.A.">
        <title>Inactivation of the mitogen-activated protein kinase Mps1 from the rice blast fungus prevents penetration of host cells but allows activation of plant defense responses.</title>
        <authorList>
            <person name="Xu J.R."/>
            <person name="Staiger C.J."/>
            <person name="Hamer J.E."/>
        </authorList>
    </citation>
    <scope>FUNCTION</scope>
    <scope>DISRUPTION PHENOTYPE</scope>
</reference>
<reference key="3">
    <citation type="journal article" date="2008" name="Eukaryot. Cell">
        <title>MADS-box transcription factor mig1 is required for infectious growth in Magnaporthe grisea.</title>
        <authorList>
            <person name="Mehrabi R."/>
            <person name="Ding S."/>
            <person name="Xu J.R."/>
        </authorList>
    </citation>
    <scope>FUNCTION</scope>
    <scope>INTERACTION WITH MIG1</scope>
</reference>
<reference key="4">
    <citation type="journal article" date="2012" name="Mol. Plant Pathol.">
        <title>MoSwi6, an APSES family transcription factor, interacts with MoMps1 and is required for hyphal and conidial morphogenesis, appressorial function and pathogenicity of Magnaporthe oryzae.</title>
        <authorList>
            <person name="Qi Z."/>
            <person name="Wang Q."/>
            <person name="Dou X."/>
            <person name="Wang W."/>
            <person name="Zhao Q."/>
            <person name="Lv R."/>
            <person name="Zhang H."/>
            <person name="Zheng X."/>
            <person name="Wang P."/>
            <person name="Zhang Z."/>
        </authorList>
    </citation>
    <scope>FUNCTION</scope>
    <scope>INTERACTION WITH SWI6</scope>
</reference>
<reference key="5">
    <citation type="journal article" date="2017" name="Environ. Microbiol.">
        <title>Expression of HopAI interferes with MAP kinase signalling in Magnaporthe oryzae.</title>
        <authorList>
            <person name="Zhang X."/>
            <person name="Liu W."/>
            <person name="Li Y."/>
            <person name="Li G."/>
            <person name="Xu J.R."/>
        </authorList>
    </citation>
    <scope>FUNCTION</scope>
</reference>
<reference key="6">
    <citation type="journal article" date="2017" name="Sci. Rep.">
        <title>The glycogen synthase kinase MoGsk1, regulated by Mps1 MAP kinase, is required for fungal development and pathogenicity in Magnaporthe oryzae.</title>
        <authorList>
            <person name="Zhou T."/>
            <person name="Dagdas Y.F."/>
            <person name="Zhu X."/>
            <person name="Zheng S."/>
            <person name="Chen L."/>
            <person name="Cartwright Z."/>
            <person name="Talbot N.J."/>
            <person name="Wang Z."/>
        </authorList>
    </citation>
    <scope>FUNCTION</scope>
    <scope>DISRUPTION PHENOTYPE</scope>
</reference>
<reference key="7">
    <citation type="journal article" date="2020" name="Sci. Rep.">
        <title>Publisher correction: The glycogen synthase kinase MoGsk1, regulated by Mps1 MAP kinase, is required for fungal development and pathogenicity in Magnaporthe oryzae.</title>
        <authorList>
            <person name="Zhou T."/>
            <person name="Dagdas Y.F."/>
            <person name="Zhu X."/>
            <person name="Zheng S."/>
            <person name="Chen L."/>
            <person name="Cartwright Z."/>
            <person name="Talbot N.J."/>
            <person name="Wang Z."/>
        </authorList>
    </citation>
    <scope>ERRATUM OF PUBMED:28424497</scope>
</reference>
<reference evidence="12" key="8">
    <citation type="submission" date="2018-01" db="PDB data bank">
        <title>Crystal structure of Mitogen-activated Protein Kinase Mps1 in Magnaporthe oryzae.</title>
        <authorList>
            <person name="Zhou F."/>
            <person name="Peng J.B."/>
            <person name="Zhao Y.X."/>
            <person name="Chen X."/>
            <person name="Zhang Y.Y."/>
            <person name="Peng Y.L."/>
            <person name="Liu J.F."/>
            <person name="Zhang G.Z."/>
        </authorList>
    </citation>
    <scope>X-RAY CRYSTALLOGRAPHY (1.99 ANGSTROMS)</scope>
</reference>
<proteinExistence type="evidence at protein level"/>
<organism>
    <name type="scientific">Pyricularia oryzae (strain 70-15 / ATCC MYA-4617 / FGSC 8958)</name>
    <name type="common">Rice blast fungus</name>
    <name type="synonym">Magnaporthe oryzae</name>
    <dbReference type="NCBI Taxonomy" id="242507"/>
    <lineage>
        <taxon>Eukaryota</taxon>
        <taxon>Fungi</taxon>
        <taxon>Dikarya</taxon>
        <taxon>Ascomycota</taxon>
        <taxon>Pezizomycotina</taxon>
        <taxon>Sordariomycetes</taxon>
        <taxon>Sordariomycetidae</taxon>
        <taxon>Magnaporthales</taxon>
        <taxon>Pyriculariaceae</taxon>
        <taxon>Pyricularia</taxon>
    </lineage>
</organism>
<sequence>MSDLQGRKIFKVFNQDFIVDERYTVTKELGQGAYGIVCAAVNNQTSEGVAIKKVTNVFSKKILAKRALREIKLLQHFRGHRNITCLYDMDIPRPDNFNETYLYEELMECDLAAIIRSGQPLTDAHFQSFIYQILCGLKYIHSANVLHRDLKPGNLLVNADCELKICDFGLARGFSVDPEENAGYMTEYVATRWYRAPEIMLSFQSYTKAIDVWSVGCILAELLGGRPFFKGRDYVDQLNQILHILGTPNEETLSRIGSPRAQEYVRNLPFMAKKPFPTLFPNANPDALDLLDRMLAFDPSSRISVEQALEHPYLHIWHDASDEPDCPTTFNFDFEVVEDVGEMRKMILDEVYRFRQLVRTAPGAGGHGAPHAPQVPIPAGAGQGQWKAEDPRPQEYVGQMNDLEAELAGGLDQRR</sequence>
<feature type="chain" id="PRO_0000453093" description="Mitogen-activated protein kinase MPS1">
    <location>
        <begin position="1"/>
        <end position="415"/>
    </location>
</feature>
<feature type="domain" description="Protein kinase" evidence="1">
    <location>
        <begin position="23"/>
        <end position="314"/>
    </location>
</feature>
<feature type="region of interest" description="Disordered" evidence="3">
    <location>
        <begin position="363"/>
        <end position="394"/>
    </location>
</feature>
<feature type="binding site" evidence="1">
    <location>
        <begin position="29"/>
        <end position="37"/>
    </location>
    <ligand>
        <name>ATP</name>
        <dbReference type="ChEBI" id="CHEBI:30616"/>
    </ligand>
</feature>
<feature type="binding site" evidence="1">
    <location>
        <position position="52"/>
    </location>
    <ligand>
        <name>ATP</name>
        <dbReference type="ChEBI" id="CHEBI:30616"/>
    </ligand>
</feature>
<feature type="strand" evidence="13">
    <location>
        <begin position="7"/>
        <end position="12"/>
    </location>
</feature>
<feature type="strand" evidence="13">
    <location>
        <begin position="15"/>
        <end position="20"/>
    </location>
</feature>
<feature type="strand" evidence="13">
    <location>
        <begin position="23"/>
        <end position="31"/>
    </location>
</feature>
<feature type="strand" evidence="13">
    <location>
        <begin position="33"/>
        <end position="42"/>
    </location>
</feature>
<feature type="turn" evidence="13">
    <location>
        <begin position="43"/>
        <end position="45"/>
    </location>
</feature>
<feature type="strand" evidence="13">
    <location>
        <begin position="48"/>
        <end position="54"/>
    </location>
</feature>
<feature type="turn" evidence="14">
    <location>
        <begin position="57"/>
        <end position="59"/>
    </location>
</feature>
<feature type="helix" evidence="13">
    <location>
        <begin position="61"/>
        <end position="76"/>
    </location>
</feature>
<feature type="turn" evidence="13">
    <location>
        <begin position="77"/>
        <end position="79"/>
    </location>
</feature>
<feature type="strand" evidence="13">
    <location>
        <begin position="86"/>
        <end position="90"/>
    </location>
</feature>
<feature type="strand" evidence="13">
    <location>
        <begin position="100"/>
        <end position="104"/>
    </location>
</feature>
<feature type="strand" evidence="13">
    <location>
        <begin position="108"/>
        <end position="110"/>
    </location>
</feature>
<feature type="helix" evidence="13">
    <location>
        <begin position="111"/>
        <end position="117"/>
    </location>
</feature>
<feature type="helix" evidence="13">
    <location>
        <begin position="123"/>
        <end position="142"/>
    </location>
</feature>
<feature type="helix" evidence="13">
    <location>
        <begin position="152"/>
        <end position="154"/>
    </location>
</feature>
<feature type="strand" evidence="13">
    <location>
        <begin position="155"/>
        <end position="157"/>
    </location>
</feature>
<feature type="strand" evidence="13">
    <location>
        <begin position="163"/>
        <end position="165"/>
    </location>
</feature>
<feature type="helix" evidence="13">
    <location>
        <begin position="179"/>
        <end position="183"/>
    </location>
</feature>
<feature type="helix" evidence="13">
    <location>
        <begin position="192"/>
        <end position="194"/>
    </location>
</feature>
<feature type="helix" evidence="13">
    <location>
        <begin position="197"/>
        <end position="200"/>
    </location>
</feature>
<feature type="helix" evidence="13">
    <location>
        <begin position="209"/>
        <end position="224"/>
    </location>
</feature>
<feature type="helix" evidence="13">
    <location>
        <begin position="234"/>
        <end position="245"/>
    </location>
</feature>
<feature type="helix" evidence="13">
    <location>
        <begin position="250"/>
        <end position="254"/>
    </location>
</feature>
<feature type="helix" evidence="13">
    <location>
        <begin position="259"/>
        <end position="267"/>
    </location>
</feature>
<feature type="helix" evidence="13">
    <location>
        <begin position="276"/>
        <end position="279"/>
    </location>
</feature>
<feature type="helix" evidence="13">
    <location>
        <begin position="285"/>
        <end position="294"/>
    </location>
</feature>
<feature type="helix" evidence="13">
    <location>
        <begin position="299"/>
        <end position="301"/>
    </location>
</feature>
<feature type="helix" evidence="13">
    <location>
        <begin position="305"/>
        <end position="309"/>
    </location>
</feature>
<feature type="helix" evidence="13">
    <location>
        <begin position="312"/>
        <end position="314"/>
    </location>
</feature>
<feature type="turn" evidence="13">
    <location>
        <begin position="315"/>
        <end position="317"/>
    </location>
</feature>
<feature type="helix" evidence="13">
    <location>
        <begin position="320"/>
        <end position="322"/>
    </location>
</feature>
<feature type="helix" evidence="13">
    <location>
        <begin position="333"/>
        <end position="336"/>
    </location>
</feature>
<feature type="helix" evidence="13">
    <location>
        <begin position="340"/>
        <end position="358"/>
    </location>
</feature>
<feature type="helix" evidence="13">
    <location>
        <begin position="396"/>
        <end position="408"/>
    </location>
</feature>
<comment type="function">
    <text evidence="4 5 6 7 8">Mitogen-activated protein kinase; part of the MCK1-MKK2-MPS1 MAP kinase (MAPK) signal transduction cascade that is essential for cell wall integrity and plant infection, but not for plant defense responses (PubMed:18344407, PubMed:22321443, PubMed:28424497, PubMed:28799700, PubMed:9770551). Beside its role in pathogenesis, the MPS1 cascade is active in conidiation and cellular stress responses (PubMed:9770551). Targets downstream of the MPS1-MAPK pathway include transcription factors MIG1 and SWI6, as well as GSK1 and MPG1 (PubMed:18344407, PubMed:22321443, PubMed:28424497).</text>
</comment>
<comment type="catalytic activity">
    <reaction evidence="11">
        <text>L-seryl-[protein] + ATP = O-phospho-L-seryl-[protein] + ADP + H(+)</text>
        <dbReference type="Rhea" id="RHEA:17989"/>
        <dbReference type="Rhea" id="RHEA-COMP:9863"/>
        <dbReference type="Rhea" id="RHEA-COMP:11604"/>
        <dbReference type="ChEBI" id="CHEBI:15378"/>
        <dbReference type="ChEBI" id="CHEBI:29999"/>
        <dbReference type="ChEBI" id="CHEBI:30616"/>
        <dbReference type="ChEBI" id="CHEBI:83421"/>
        <dbReference type="ChEBI" id="CHEBI:456216"/>
        <dbReference type="EC" id="2.7.11.24"/>
    </reaction>
    <physiologicalReaction direction="left-to-right" evidence="11">
        <dbReference type="Rhea" id="RHEA:17990"/>
    </physiologicalReaction>
</comment>
<comment type="catalytic activity">
    <reaction evidence="11">
        <text>L-threonyl-[protein] + ATP = O-phospho-L-threonyl-[protein] + ADP + H(+)</text>
        <dbReference type="Rhea" id="RHEA:46608"/>
        <dbReference type="Rhea" id="RHEA-COMP:11060"/>
        <dbReference type="Rhea" id="RHEA-COMP:11605"/>
        <dbReference type="ChEBI" id="CHEBI:15378"/>
        <dbReference type="ChEBI" id="CHEBI:30013"/>
        <dbReference type="ChEBI" id="CHEBI:30616"/>
        <dbReference type="ChEBI" id="CHEBI:61977"/>
        <dbReference type="ChEBI" id="CHEBI:456216"/>
        <dbReference type="EC" id="2.7.11.24"/>
    </reaction>
    <physiologicalReaction direction="left-to-right" evidence="11">
        <dbReference type="Rhea" id="RHEA:46609"/>
    </physiologicalReaction>
</comment>
<comment type="cofactor">
    <cofactor evidence="2">
        <name>Mg(2+)</name>
        <dbReference type="ChEBI" id="CHEBI:18420"/>
    </cofactor>
</comment>
<comment type="subunit">
    <text evidence="4 5">Interacts with transcription factor MIG1 (PubMed:18344407). Interacts with transcription factor SWI6 (PubMed:22321443).</text>
</comment>
<comment type="disruption phenotype">
    <text evidence="6 8">Leads to sensitivity to cell-wall-digesting enzymes, as well as reduced sporulation and fertility (PubMed:9770551). Abolishes pathogenicity by blocking the penetration of appressoria into plant cell surfaces (PubMed:9770551). Does not affect the ability to trigger early plant-cell defense responses (PubMed:9770551). Affects the expression of MPG1 and GSK1 (PubMed:28424497).</text>
</comment>
<comment type="similarity">
    <text evidence="10">Belongs to the protein kinase superfamily. Ser/Thr protein kinase family. MAP kinase subfamily.</text>
</comment>
<name>MPS1_PYRO7</name>
<keyword id="KW-0002">3D-structure</keyword>
<keyword id="KW-0067">ATP-binding</keyword>
<keyword id="KW-0418">Kinase</keyword>
<keyword id="KW-0460">Magnesium</keyword>
<keyword id="KW-0547">Nucleotide-binding</keyword>
<keyword id="KW-1185">Reference proteome</keyword>
<keyword id="KW-0723">Serine/threonine-protein kinase</keyword>
<keyword id="KW-0808">Transferase</keyword>
<keyword id="KW-0843">Virulence</keyword>
<dbReference type="EC" id="2.7.11.24" evidence="8"/>
<dbReference type="EMBL" id="CM001233">
    <property type="protein sequence ID" value="EHA52630.1"/>
    <property type="molecule type" value="Genomic_DNA"/>
</dbReference>
<dbReference type="RefSeq" id="XP_003712437.1">
    <property type="nucleotide sequence ID" value="XM_003712389.1"/>
</dbReference>
<dbReference type="PDB" id="5Z33">
    <property type="method" value="X-ray"/>
    <property type="resolution" value="1.99 A"/>
    <property type="chains" value="A=1-415"/>
</dbReference>
<dbReference type="PDB" id="8H59">
    <property type="method" value="X-ray"/>
    <property type="resolution" value="2.15 A"/>
    <property type="chains" value="A=5-412"/>
</dbReference>
<dbReference type="PDBsum" id="5Z33"/>
<dbReference type="PDBsum" id="8H59"/>
<dbReference type="SMR" id="G4N374"/>
<dbReference type="FunCoup" id="G4N374">
    <property type="interactions" value="323"/>
</dbReference>
<dbReference type="STRING" id="242507.G4N374"/>
<dbReference type="EnsemblFungi" id="MGG_04943T0">
    <property type="protein sequence ID" value="MGG_04943T0"/>
    <property type="gene ID" value="MGG_04943"/>
</dbReference>
<dbReference type="GeneID" id="2675515"/>
<dbReference type="KEGG" id="mgr:MGG_04943"/>
<dbReference type="VEuPathDB" id="FungiDB:MGG_04943"/>
<dbReference type="eggNOG" id="KOG0660">
    <property type="taxonomic scope" value="Eukaryota"/>
</dbReference>
<dbReference type="HOGENOM" id="CLU_000288_181_1_1"/>
<dbReference type="InParanoid" id="G4N374"/>
<dbReference type="OMA" id="MDIPRPE"/>
<dbReference type="OrthoDB" id="192887at2759"/>
<dbReference type="Proteomes" id="UP000009058">
    <property type="component" value="Chromosome 3"/>
</dbReference>
<dbReference type="GO" id="GO:0005737">
    <property type="term" value="C:cytoplasm"/>
    <property type="evidence" value="ECO:0007669"/>
    <property type="project" value="EnsemblFungi"/>
</dbReference>
<dbReference type="GO" id="GO:0005634">
    <property type="term" value="C:nucleus"/>
    <property type="evidence" value="ECO:0007669"/>
    <property type="project" value="EnsemblFungi"/>
</dbReference>
<dbReference type="GO" id="GO:0005524">
    <property type="term" value="F:ATP binding"/>
    <property type="evidence" value="ECO:0007669"/>
    <property type="project" value="UniProtKB-KW"/>
</dbReference>
<dbReference type="GO" id="GO:0004707">
    <property type="term" value="F:MAP kinase activity"/>
    <property type="evidence" value="ECO:0007669"/>
    <property type="project" value="UniProtKB-EC"/>
</dbReference>
<dbReference type="GO" id="GO:0106310">
    <property type="term" value="F:protein serine kinase activity"/>
    <property type="evidence" value="ECO:0007669"/>
    <property type="project" value="RHEA"/>
</dbReference>
<dbReference type="GO" id="GO:0000196">
    <property type="term" value="P:cell integrity MAPK cascade"/>
    <property type="evidence" value="ECO:0007669"/>
    <property type="project" value="EnsemblFungi"/>
</dbReference>
<dbReference type="GO" id="GO:1902660">
    <property type="term" value="P:negative regulation of glucose mediated signaling pathway"/>
    <property type="evidence" value="ECO:0007669"/>
    <property type="project" value="EnsemblFungi"/>
</dbReference>
<dbReference type="GO" id="GO:1902413">
    <property type="term" value="P:negative regulation of mitotic cytokinesis"/>
    <property type="evidence" value="ECO:0007669"/>
    <property type="project" value="EnsemblFungi"/>
</dbReference>
<dbReference type="GO" id="GO:1905665">
    <property type="term" value="P:positive regulation of calcium ion import across plasma membrane"/>
    <property type="evidence" value="ECO:0007669"/>
    <property type="project" value="EnsemblFungi"/>
</dbReference>
<dbReference type="GO" id="GO:0050850">
    <property type="term" value="P:positive regulation of calcium-mediated signaling"/>
    <property type="evidence" value="ECO:0007669"/>
    <property type="project" value="EnsemblFungi"/>
</dbReference>
<dbReference type="GO" id="GO:0051094">
    <property type="term" value="P:positive regulation of developmental process"/>
    <property type="evidence" value="ECO:0007669"/>
    <property type="project" value="UniProtKB-ARBA"/>
</dbReference>
<dbReference type="GO" id="GO:0032995">
    <property type="term" value="P:regulation of fungal-type cell wall biogenesis"/>
    <property type="evidence" value="ECO:0007669"/>
    <property type="project" value="EnsemblFungi"/>
</dbReference>
<dbReference type="CDD" id="cd07857">
    <property type="entry name" value="STKc_MPK1"/>
    <property type="match status" value="1"/>
</dbReference>
<dbReference type="FunFam" id="1.10.510.10:FF:000013">
    <property type="entry name" value="Mitogen-activated protein kinase"/>
    <property type="match status" value="1"/>
</dbReference>
<dbReference type="FunFam" id="3.30.200.20:FF:000157">
    <property type="entry name" value="Mitogen-activated protein kinase"/>
    <property type="match status" value="1"/>
</dbReference>
<dbReference type="Gene3D" id="3.30.200.20">
    <property type="entry name" value="Phosphorylase Kinase, domain 1"/>
    <property type="match status" value="1"/>
</dbReference>
<dbReference type="Gene3D" id="1.10.510.10">
    <property type="entry name" value="Transferase(Phosphotransferase) domain 1"/>
    <property type="match status" value="1"/>
</dbReference>
<dbReference type="InterPro" id="IPR011009">
    <property type="entry name" value="Kinase-like_dom_sf"/>
</dbReference>
<dbReference type="InterPro" id="IPR050117">
    <property type="entry name" value="MAP_kinase"/>
</dbReference>
<dbReference type="InterPro" id="IPR003527">
    <property type="entry name" value="MAP_kinase_CS"/>
</dbReference>
<dbReference type="InterPro" id="IPR000719">
    <property type="entry name" value="Prot_kinase_dom"/>
</dbReference>
<dbReference type="InterPro" id="IPR017441">
    <property type="entry name" value="Protein_kinase_ATP_BS"/>
</dbReference>
<dbReference type="InterPro" id="IPR008271">
    <property type="entry name" value="Ser/Thr_kinase_AS"/>
</dbReference>
<dbReference type="PANTHER" id="PTHR24055">
    <property type="entry name" value="MITOGEN-ACTIVATED PROTEIN KINASE"/>
    <property type="match status" value="1"/>
</dbReference>
<dbReference type="Pfam" id="PF00069">
    <property type="entry name" value="Pkinase"/>
    <property type="match status" value="1"/>
</dbReference>
<dbReference type="SMART" id="SM00220">
    <property type="entry name" value="S_TKc"/>
    <property type="match status" value="1"/>
</dbReference>
<dbReference type="SUPFAM" id="SSF56112">
    <property type="entry name" value="Protein kinase-like (PK-like)"/>
    <property type="match status" value="1"/>
</dbReference>
<dbReference type="PROSITE" id="PS01351">
    <property type="entry name" value="MAPK"/>
    <property type="match status" value="1"/>
</dbReference>
<dbReference type="PROSITE" id="PS00107">
    <property type="entry name" value="PROTEIN_KINASE_ATP"/>
    <property type="match status" value="1"/>
</dbReference>
<dbReference type="PROSITE" id="PS50011">
    <property type="entry name" value="PROTEIN_KINASE_DOM"/>
    <property type="match status" value="1"/>
</dbReference>
<dbReference type="PROSITE" id="PS00108">
    <property type="entry name" value="PROTEIN_KINASE_ST"/>
    <property type="match status" value="1"/>
</dbReference>
<accession>G4N374</accession>
<evidence type="ECO:0000255" key="1">
    <source>
        <dbReference type="PROSITE-ProRule" id="PRU00159"/>
    </source>
</evidence>
<evidence type="ECO:0000255" key="2">
    <source>
        <dbReference type="RuleBase" id="RU361165"/>
    </source>
</evidence>
<evidence type="ECO:0000256" key="3">
    <source>
        <dbReference type="SAM" id="MobiDB-lite"/>
    </source>
</evidence>
<evidence type="ECO:0000269" key="4">
    <source>
    </source>
</evidence>
<evidence type="ECO:0000269" key="5">
    <source>
    </source>
</evidence>
<evidence type="ECO:0000269" key="6">
    <source>
    </source>
</evidence>
<evidence type="ECO:0000269" key="7">
    <source>
    </source>
</evidence>
<evidence type="ECO:0000269" key="8">
    <source>
    </source>
</evidence>
<evidence type="ECO:0000303" key="9">
    <source>
    </source>
</evidence>
<evidence type="ECO:0000305" key="10"/>
<evidence type="ECO:0000305" key="11">
    <source>
    </source>
</evidence>
<evidence type="ECO:0007744" key="12">
    <source>
        <dbReference type="PDB" id="5Z33"/>
    </source>
</evidence>
<evidence type="ECO:0007829" key="13">
    <source>
        <dbReference type="PDB" id="5Z33"/>
    </source>
</evidence>
<evidence type="ECO:0007829" key="14">
    <source>
        <dbReference type="PDB" id="8H59"/>
    </source>
</evidence>
<gene>
    <name evidence="9" type="primary">MPS1</name>
    <name type="ORF">MGG_04943</name>
</gene>
<protein>
    <recommendedName>
        <fullName evidence="9">Mitogen-activated protein kinase MPS1</fullName>
        <shortName evidence="9">MAPK MPS1</shortName>
        <ecNumber evidence="8">2.7.11.24</ecNumber>
    </recommendedName>
</protein>